<protein>
    <recommendedName>
        <fullName>Protein MGF 110-2L</fullName>
    </recommendedName>
</protein>
<sequence length="104" mass="12213">MRFFSYLGLLLAGLTSLQGFSTDNLLEEELRYWCQYVKNCRFCWTCQDGLCKNKVLKDMSSVQEHSYPMEHCMIHRQCKYIRDGPIFQVECTMQTSDATHLINA</sequence>
<organism>
    <name type="scientific">African swine fever virus (strain Badajoz 1971 Vero-adapted)</name>
    <name type="common">Ba71V</name>
    <name type="synonym">ASFV</name>
    <dbReference type="NCBI Taxonomy" id="10498"/>
    <lineage>
        <taxon>Viruses</taxon>
        <taxon>Varidnaviria</taxon>
        <taxon>Bamfordvirae</taxon>
        <taxon>Nucleocytoviricota</taxon>
        <taxon>Pokkesviricetes</taxon>
        <taxon>Asfuvirales</taxon>
        <taxon>Asfarviridae</taxon>
        <taxon>Asfivirus</taxon>
        <taxon>African swine fever virus</taxon>
    </lineage>
</organism>
<gene>
    <name type="ordered locus">BA71V-009</name>
    <name type="ordered locus">BA71V-010</name>
    <name type="ORF">U104L</name>
</gene>
<comment type="function">
    <text evidence="1">Plays a role in virus cell tropism, and may be required for efficient virus replication in macrophages.</text>
</comment>
<comment type="induction">
    <text evidence="3">Expressed in the early phase of the viral replicative cycle.</text>
</comment>
<comment type="similarity">
    <text evidence="4">Belongs to the asfivirus MGF 110 family.</text>
</comment>
<proteinExistence type="evidence at transcript level"/>
<reference key="1">
    <citation type="journal article" date="1990" name="J. Virol.">
        <title>Multigene families in African swine fever virus: family 110.</title>
        <authorList>
            <person name="Almendral J.M."/>
            <person name="Almazan F."/>
            <person name="Blasco R."/>
            <person name="Vinuela E."/>
        </authorList>
    </citation>
    <scope>NUCLEOTIDE SEQUENCE [GENOMIC DNA]</scope>
</reference>
<reference key="2">
    <citation type="journal article" date="1995" name="Virology">
        <title>Analysis of the complete nucleotide sequence of African swine fever virus.</title>
        <authorList>
            <person name="Yanez R.J."/>
            <person name="Rodriguez J.M."/>
            <person name="Nogal M.L."/>
            <person name="Yuste L."/>
            <person name="Enriquez C."/>
            <person name="Rodriguez J.F."/>
            <person name="Vinuela E."/>
        </authorList>
    </citation>
    <scope>NUCLEOTIDE SEQUENCE [LARGE SCALE GENOMIC DNA]</scope>
</reference>
<reference key="3">
    <citation type="journal article" date="2020" name="J. Virol.">
        <title>The African Swine Fever Virus Transcriptome.</title>
        <authorList>
            <person name="Cackett G."/>
            <person name="Matelska D."/>
            <person name="Sykora M."/>
            <person name="Portugal R."/>
            <person name="Malecki M."/>
            <person name="Baehler J."/>
            <person name="Dixon L."/>
            <person name="Werner F."/>
        </authorList>
    </citation>
    <scope>INDUCTION</scope>
</reference>
<keyword id="KW-0244">Early protein</keyword>
<keyword id="KW-1185">Reference proteome</keyword>
<keyword id="KW-0732">Signal</keyword>
<feature type="signal peptide" evidence="2">
    <location>
        <begin position="1"/>
        <end position="31"/>
    </location>
</feature>
<feature type="chain" id="PRO_0000036739" description="Protein MGF 110-2L">
    <location>
        <begin position="32"/>
        <end position="104"/>
    </location>
</feature>
<accession>P18559</accession>
<evidence type="ECO:0000250" key="1"/>
<evidence type="ECO:0000250" key="2">
    <source>
        <dbReference type="UniProtKB" id="A9JLI3"/>
    </source>
</evidence>
<evidence type="ECO:0000269" key="3">
    <source>
    </source>
</evidence>
<evidence type="ECO:0000305" key="4"/>
<dbReference type="EMBL" id="M36467">
    <property type="protein sequence ID" value="AAA42687.1"/>
    <property type="molecule type" value="Genomic_DNA"/>
</dbReference>
<dbReference type="EMBL" id="U18466">
    <property type="protein sequence ID" value="AAA65244.1"/>
    <property type="molecule type" value="Genomic_DNA"/>
</dbReference>
<dbReference type="PIR" id="D43702">
    <property type="entry name" value="D43702"/>
</dbReference>
<dbReference type="RefSeq" id="NP_042708.1">
    <property type="nucleotide sequence ID" value="NC_001659.2"/>
</dbReference>
<dbReference type="GeneID" id="22220398"/>
<dbReference type="KEGG" id="vg:22220398"/>
<dbReference type="Proteomes" id="UP000000624">
    <property type="component" value="Segment"/>
</dbReference>
<dbReference type="InterPro" id="IPR004848">
    <property type="entry name" value="ASFV_fam_110"/>
</dbReference>
<dbReference type="Pfam" id="PF01639">
    <property type="entry name" value="v110"/>
    <property type="match status" value="1"/>
</dbReference>
<organismHost>
    <name type="scientific">Ornithodoros</name>
    <name type="common">relapsing fever ticks</name>
    <dbReference type="NCBI Taxonomy" id="6937"/>
</organismHost>
<organismHost>
    <name type="scientific">Sus scrofa</name>
    <name type="common">Pig</name>
    <dbReference type="NCBI Taxonomy" id="9823"/>
</organismHost>
<name>1102L_ASFB7</name>